<organism>
    <name type="scientific">Methanopyrus kandleri (strain AV19 / DSM 6324 / JCM 9639 / NBRC 100938)</name>
    <dbReference type="NCBI Taxonomy" id="190192"/>
    <lineage>
        <taxon>Archaea</taxon>
        <taxon>Methanobacteriati</taxon>
        <taxon>Methanobacteriota</taxon>
        <taxon>Methanomada group</taxon>
        <taxon>Methanopyri</taxon>
        <taxon>Methanopyrales</taxon>
        <taxon>Methanopyraceae</taxon>
        <taxon>Methanopyrus</taxon>
    </lineage>
</organism>
<feature type="chain" id="PRO_0000143175" description="Peptide chain release factor subunit 1">
    <location>
        <begin position="1"/>
        <end position="409"/>
    </location>
</feature>
<reference key="1">
    <citation type="journal article" date="2002" name="Proc. Natl. Acad. Sci. U.S.A.">
        <title>The complete genome of hyperthermophile Methanopyrus kandleri AV19 and monophyly of archaeal methanogens.</title>
        <authorList>
            <person name="Slesarev A.I."/>
            <person name="Mezhevaya K.V."/>
            <person name="Makarova K.S."/>
            <person name="Polushin N.N."/>
            <person name="Shcherbinina O.V."/>
            <person name="Shakhova V.V."/>
            <person name="Belova G.I."/>
            <person name="Aravind L."/>
            <person name="Natale D.A."/>
            <person name="Rogozin I.B."/>
            <person name="Tatusov R.L."/>
            <person name="Wolf Y.I."/>
            <person name="Stetter K.O."/>
            <person name="Malykh A.G."/>
            <person name="Koonin E.V."/>
            <person name="Kozyavkin S.A."/>
        </authorList>
    </citation>
    <scope>NUCLEOTIDE SEQUENCE [LARGE SCALE GENOMIC DNA]</scope>
    <source>
        <strain>AV19 / DSM 6324 / JCM 9639 / NBRC 100938</strain>
    </source>
</reference>
<dbReference type="EMBL" id="AE009439">
    <property type="protein sequence ID" value="AAM01973.1"/>
    <property type="molecule type" value="Genomic_DNA"/>
</dbReference>
<dbReference type="RefSeq" id="WP_011019128.1">
    <property type="nucleotide sequence ID" value="NC_003551.1"/>
</dbReference>
<dbReference type="SMR" id="Q8TXB5"/>
<dbReference type="FunCoup" id="Q8TXB5">
    <property type="interactions" value="211"/>
</dbReference>
<dbReference type="STRING" id="190192.MK0759"/>
<dbReference type="PaxDb" id="190192-MK0759"/>
<dbReference type="EnsemblBacteria" id="AAM01973">
    <property type="protein sequence ID" value="AAM01973"/>
    <property type="gene ID" value="MK0759"/>
</dbReference>
<dbReference type="GeneID" id="1476860"/>
<dbReference type="KEGG" id="mka:MK0759"/>
<dbReference type="PATRIC" id="fig|190192.8.peg.799"/>
<dbReference type="HOGENOM" id="CLU_035759_3_0_2"/>
<dbReference type="InParanoid" id="Q8TXB5"/>
<dbReference type="OrthoDB" id="1011at2157"/>
<dbReference type="Proteomes" id="UP000001826">
    <property type="component" value="Chromosome"/>
</dbReference>
<dbReference type="GO" id="GO:0005737">
    <property type="term" value="C:cytoplasm"/>
    <property type="evidence" value="ECO:0007669"/>
    <property type="project" value="UniProtKB-SubCell"/>
</dbReference>
<dbReference type="GO" id="GO:0016149">
    <property type="term" value="F:translation release factor activity, codon specific"/>
    <property type="evidence" value="ECO:0007669"/>
    <property type="project" value="UniProtKB-UniRule"/>
</dbReference>
<dbReference type="FunFam" id="3.30.1330.30:FF:000032">
    <property type="entry name" value="Eukaryotic peptide chain release factor subunit 1"/>
    <property type="match status" value="1"/>
</dbReference>
<dbReference type="FunFam" id="3.30.420.60:FF:000003">
    <property type="entry name" value="Peptide chain release factor subunit 1"/>
    <property type="match status" value="1"/>
</dbReference>
<dbReference type="FunFam" id="3.30.960.10:FF:000003">
    <property type="entry name" value="Peptide chain release factor subunit 1"/>
    <property type="match status" value="1"/>
</dbReference>
<dbReference type="Gene3D" id="3.30.1330.30">
    <property type="match status" value="1"/>
</dbReference>
<dbReference type="Gene3D" id="3.30.960.10">
    <property type="entry name" value="eRF1 domain 1"/>
    <property type="match status" value="1"/>
</dbReference>
<dbReference type="Gene3D" id="3.30.420.60">
    <property type="entry name" value="eRF1 domain 2"/>
    <property type="match status" value="1"/>
</dbReference>
<dbReference type="HAMAP" id="MF_00424">
    <property type="entry name" value="Rel_fact_arch_1"/>
    <property type="match status" value="1"/>
</dbReference>
<dbReference type="InterPro" id="IPR042226">
    <property type="entry name" value="eFR1_2_sf"/>
</dbReference>
<dbReference type="InterPro" id="IPR005140">
    <property type="entry name" value="eRF1_1_Pelota"/>
</dbReference>
<dbReference type="InterPro" id="IPR024049">
    <property type="entry name" value="eRF1_1_sf"/>
</dbReference>
<dbReference type="InterPro" id="IPR005141">
    <property type="entry name" value="eRF1_2"/>
</dbReference>
<dbReference type="InterPro" id="IPR005142">
    <property type="entry name" value="eRF1_3"/>
</dbReference>
<dbReference type="InterPro" id="IPR020918">
    <property type="entry name" value="Peptide_chain-rel_aRF1"/>
</dbReference>
<dbReference type="InterPro" id="IPR004403">
    <property type="entry name" value="Peptide_chain-rel_eRF1/aRF1"/>
</dbReference>
<dbReference type="InterPro" id="IPR029064">
    <property type="entry name" value="Ribosomal_eL30-like_sf"/>
</dbReference>
<dbReference type="NCBIfam" id="TIGR03676">
    <property type="entry name" value="aRF1_eRF1"/>
    <property type="match status" value="1"/>
</dbReference>
<dbReference type="PANTHER" id="PTHR10113">
    <property type="entry name" value="PEPTIDE CHAIN RELEASE FACTOR SUBUNIT 1"/>
    <property type="match status" value="1"/>
</dbReference>
<dbReference type="Pfam" id="PF03463">
    <property type="entry name" value="eRF1_1"/>
    <property type="match status" value="1"/>
</dbReference>
<dbReference type="Pfam" id="PF03464">
    <property type="entry name" value="eRF1_2"/>
    <property type="match status" value="1"/>
</dbReference>
<dbReference type="Pfam" id="PF03465">
    <property type="entry name" value="eRF1_3"/>
    <property type="match status" value="1"/>
</dbReference>
<dbReference type="SMART" id="SM01194">
    <property type="entry name" value="eRF1_1"/>
    <property type="match status" value="1"/>
</dbReference>
<dbReference type="SUPFAM" id="SSF55315">
    <property type="entry name" value="L30e-like"/>
    <property type="match status" value="1"/>
</dbReference>
<dbReference type="SUPFAM" id="SSF55481">
    <property type="entry name" value="N-terminal domain of eukaryotic peptide chain release factor subunit 1, ERF1"/>
    <property type="match status" value="1"/>
</dbReference>
<dbReference type="SUPFAM" id="SSF53137">
    <property type="entry name" value="Translational machinery components"/>
    <property type="match status" value="1"/>
</dbReference>
<evidence type="ECO:0000255" key="1">
    <source>
        <dbReference type="HAMAP-Rule" id="MF_00424"/>
    </source>
</evidence>
<sequence>MAESSTVERYRFRKMIERLENLRGQGTELITIYIPPENRLSDVIAQMREEYSQASNIKSKRTRKNVQSAIEVVMQRLKMVGETPENGLVVLVGTVQDGTKEKMVAELIEPPEPVDRFIYRCDSKFYLEPLKEYLEEKDVYGILVMDRREATIGLVKGKRIEPVKRLTSDVPGKHKAGGQSQRRFDRLIEHAAHEFYQKVGEAAREAFEDVKDLKGIIVGGPGPTKEEFLDGDYLPKDLKEKVLTVVDVGNTDESGLREALNKAEEALKEAELVREKRLVRKFMEEAVNGELAAYGEEVDELLKMGAVEVLLVSEDLEGYKVILRCPECGYENIVTVKEKDEAKKYVEECPECGEAELNVEEIKDIVDYYVELAEQMGSNVEIISTETEEGAQFYNAFRGLGALLRFRPK</sequence>
<keyword id="KW-0963">Cytoplasm</keyword>
<keyword id="KW-0648">Protein biosynthesis</keyword>
<keyword id="KW-1185">Reference proteome</keyword>
<name>RF1_METKA</name>
<proteinExistence type="inferred from homology"/>
<protein>
    <recommendedName>
        <fullName evidence="1">Peptide chain release factor subunit 1</fullName>
    </recommendedName>
    <alternativeName>
        <fullName evidence="1">Translation termination factor aRF1</fullName>
    </alternativeName>
</protein>
<gene>
    <name evidence="1" type="primary">prf1</name>
    <name type="synonym">erf1</name>
    <name type="ordered locus">MK0759</name>
</gene>
<comment type="function">
    <text evidence="1">Directs the termination of nascent peptide synthesis (translation) in response to the termination codons UAA, UAG and UGA.</text>
</comment>
<comment type="subunit">
    <text evidence="1">Heterodimer of two subunits, one of which binds GTP.</text>
</comment>
<comment type="subcellular location">
    <subcellularLocation>
        <location evidence="1">Cytoplasm</location>
    </subcellularLocation>
</comment>
<comment type="similarity">
    <text evidence="1">Belongs to the eukaryotic release factor 1 family.</text>
</comment>
<accession>Q8TXB5</accession>